<reference key="1">
    <citation type="journal article" date="1996" name="Mol. Phylogenet. Evol.">
        <title>Phylogenetic inferences from chloroplast chlB gene sequences of Nephrolepis exaltata (Filicopsida), Ephedra altissima (Gnetopsida), and diverse land plants.</title>
        <authorList>
            <person name="Boivin R."/>
            <person name="Richard M."/>
            <person name="Beauseigle D."/>
            <person name="Bousquet J."/>
            <person name="Bellemare G."/>
        </authorList>
    </citation>
    <scope>NUCLEOTIDE SEQUENCE [GENOMIC DNA]</scope>
</reference>
<organism>
    <name type="scientific">Araucaria heterophylla</name>
    <name type="common">Norfolk Island pine</name>
    <dbReference type="NCBI Taxonomy" id="34341"/>
    <lineage>
        <taxon>Eukaryota</taxon>
        <taxon>Viridiplantae</taxon>
        <taxon>Streptophyta</taxon>
        <taxon>Embryophyta</taxon>
        <taxon>Tracheophyta</taxon>
        <taxon>Spermatophyta</taxon>
        <taxon>Pinopsida</taxon>
        <taxon>Pinidae</taxon>
        <taxon>Conifers II</taxon>
        <taxon>Araucariales</taxon>
        <taxon>Araucariaceae</taxon>
        <taxon>Araucaria</taxon>
    </lineage>
</organism>
<name>CHLB_ARAHE</name>
<keyword id="KW-0004">4Fe-4S</keyword>
<keyword id="KW-0067">ATP-binding</keyword>
<keyword id="KW-0149">Chlorophyll biosynthesis</keyword>
<keyword id="KW-0150">Chloroplast</keyword>
<keyword id="KW-0408">Iron</keyword>
<keyword id="KW-0411">Iron-sulfur</keyword>
<keyword id="KW-0479">Metal-binding</keyword>
<keyword id="KW-0547">Nucleotide-binding</keyword>
<keyword id="KW-0560">Oxidoreductase</keyword>
<keyword id="KW-0602">Photosynthesis</keyword>
<keyword id="KW-0934">Plastid</keyword>
<sequence length="103" mass="11783">RRLLRDLDIEINQIIPEGGSVEDLKDLPKAWFNLIPYREVGLMTAIYLNKEFGMPYISTAPMGAVDIAEWIRQIHKNVNTLAPSSSSKKVDYEPYIDGQTRFV</sequence>
<evidence type="ECO:0000250" key="1"/>
<evidence type="ECO:0000305" key="2"/>
<protein>
    <recommendedName>
        <fullName>Light-independent protochlorophyllide reductase subunit B</fullName>
        <shortName>DPOR subunit B</shortName>
        <shortName>LI-POR subunit B</shortName>
        <ecNumber>1.3.7.7</ecNumber>
    </recommendedName>
</protein>
<dbReference type="EC" id="1.3.7.7"/>
<dbReference type="EMBL" id="L25763">
    <property type="protein sequence ID" value="AAC37484.1"/>
    <property type="molecule type" value="Genomic_DNA"/>
</dbReference>
<dbReference type="SMR" id="P37843"/>
<dbReference type="UniPathway" id="UPA00670"/>
<dbReference type="GO" id="GO:0009507">
    <property type="term" value="C:chloroplast"/>
    <property type="evidence" value="ECO:0007669"/>
    <property type="project" value="UniProtKB-SubCell"/>
</dbReference>
<dbReference type="GO" id="GO:0051539">
    <property type="term" value="F:4 iron, 4 sulfur cluster binding"/>
    <property type="evidence" value="ECO:0007669"/>
    <property type="project" value="UniProtKB-KW"/>
</dbReference>
<dbReference type="GO" id="GO:0005524">
    <property type="term" value="F:ATP binding"/>
    <property type="evidence" value="ECO:0007669"/>
    <property type="project" value="UniProtKB-KW"/>
</dbReference>
<dbReference type="GO" id="GO:0046872">
    <property type="term" value="F:metal ion binding"/>
    <property type="evidence" value="ECO:0007669"/>
    <property type="project" value="UniProtKB-KW"/>
</dbReference>
<dbReference type="GO" id="GO:0016491">
    <property type="term" value="F:oxidoreductase activity"/>
    <property type="evidence" value="ECO:0007669"/>
    <property type="project" value="UniProtKB-KW"/>
</dbReference>
<dbReference type="GO" id="GO:0036068">
    <property type="term" value="P:light-independent chlorophyll biosynthetic process"/>
    <property type="evidence" value="ECO:0007669"/>
    <property type="project" value="UniProtKB-UniPathway"/>
</dbReference>
<dbReference type="GO" id="GO:0015979">
    <property type="term" value="P:photosynthesis"/>
    <property type="evidence" value="ECO:0007669"/>
    <property type="project" value="UniProtKB-KW"/>
</dbReference>
<dbReference type="Gene3D" id="3.40.50.1980">
    <property type="entry name" value="Nitrogenase molybdenum iron protein domain"/>
    <property type="match status" value="1"/>
</dbReference>
<dbReference type="InterPro" id="IPR050152">
    <property type="entry name" value="ChlB/BchB/BchZ"/>
</dbReference>
<dbReference type="InterPro" id="IPR000510">
    <property type="entry name" value="Nase/OxRdtase_comp1"/>
</dbReference>
<dbReference type="PANTHER" id="PTHR33712">
    <property type="entry name" value="LIGHT-INDEPENDENT PROTOCHLOROPHYLLIDE REDUCTASE SUBUNIT B"/>
    <property type="match status" value="1"/>
</dbReference>
<dbReference type="PANTHER" id="PTHR33712:SF7">
    <property type="entry name" value="LIGHT-INDEPENDENT PROTOCHLOROPHYLLIDE REDUCTASE SUBUNIT B"/>
    <property type="match status" value="1"/>
</dbReference>
<dbReference type="Pfam" id="PF00148">
    <property type="entry name" value="Oxidored_nitro"/>
    <property type="match status" value="1"/>
</dbReference>
<dbReference type="SUPFAM" id="SSF53807">
    <property type="entry name" value="Helical backbone' metal receptor"/>
    <property type="match status" value="1"/>
</dbReference>
<comment type="function">
    <text evidence="1">Component of the dark-operative protochlorophyllide reductase (DPOR) that uses Mg-ATP and reduced ferredoxin to reduce ring D of protochlorophyllide (Pchlide) to form chlorophyllide a (Chlide). This reaction is light-independent. The NB-protein (ChlN-ChlB) is the catalytic component of the complex (By similarity).</text>
</comment>
<comment type="catalytic activity">
    <reaction>
        <text>chlorophyllide a + oxidized 2[4Fe-4S]-[ferredoxin] + 2 ADP + 2 phosphate = protochlorophyllide a + reduced 2[4Fe-4S]-[ferredoxin] + 2 ATP + 2 H2O</text>
        <dbReference type="Rhea" id="RHEA:28202"/>
        <dbReference type="Rhea" id="RHEA-COMP:10002"/>
        <dbReference type="Rhea" id="RHEA-COMP:10004"/>
        <dbReference type="ChEBI" id="CHEBI:15377"/>
        <dbReference type="ChEBI" id="CHEBI:30616"/>
        <dbReference type="ChEBI" id="CHEBI:33722"/>
        <dbReference type="ChEBI" id="CHEBI:33723"/>
        <dbReference type="ChEBI" id="CHEBI:43474"/>
        <dbReference type="ChEBI" id="CHEBI:83348"/>
        <dbReference type="ChEBI" id="CHEBI:83350"/>
        <dbReference type="ChEBI" id="CHEBI:456216"/>
        <dbReference type="EC" id="1.3.7.7"/>
    </reaction>
</comment>
<comment type="cofactor">
    <cofactor evidence="1">
        <name>[4Fe-4S] cluster</name>
        <dbReference type="ChEBI" id="CHEBI:49883"/>
    </cofactor>
    <text evidence="1">Binds 1 [4Fe-4S] cluster per heterodimer. The cluster is bound at the heterodimer interface by residues from both subunits.</text>
</comment>
<comment type="pathway">
    <text>Porphyrin-containing compound metabolism; chlorophyll biosynthesis (light-independent).</text>
</comment>
<comment type="subunit">
    <text evidence="1">Protochlorophyllide reductase is composed of three subunits; ChlL, ChlN and ChlB. Forms a heterotetramer of two ChlB and two ChlN subunits (By similarity).</text>
</comment>
<comment type="subcellular location">
    <subcellularLocation>
        <location>Plastid</location>
        <location>Chloroplast</location>
    </subcellularLocation>
</comment>
<comment type="similarity">
    <text evidence="2">Belongs to the ChlB/BchB/BchZ family.</text>
</comment>
<gene>
    <name type="primary">chlB</name>
</gene>
<proteinExistence type="inferred from homology"/>
<geneLocation type="chloroplast"/>
<accession>P37843</accession>
<feature type="chain" id="PRO_0000219810" description="Light-independent protochlorophyllide reductase subunit B">
    <location>
        <begin position="1" status="less than"/>
        <end position="103" status="greater than"/>
    </location>
</feature>
<feature type="non-terminal residue">
    <location>
        <position position="1"/>
    </location>
</feature>
<feature type="non-terminal residue">
    <location>
        <position position="103"/>
    </location>
</feature>